<protein>
    <recommendedName>
        <fullName evidence="1">2-dehydro-3-deoxyphosphooctonate aldolase</fullName>
        <ecNumber evidence="1">2.5.1.55</ecNumber>
    </recommendedName>
    <alternativeName>
        <fullName evidence="1">3-deoxy-D-manno-octulosonic acid 8-phosphate synthase</fullName>
    </alternativeName>
    <alternativeName>
        <fullName evidence="1">KDO-8-phosphate synthase</fullName>
        <shortName evidence="1">KDO 8-P synthase</shortName>
        <shortName evidence="1">KDOPS</shortName>
    </alternativeName>
    <alternativeName>
        <fullName evidence="1">Phospho-2-dehydro-3-deoxyoctonate aldolase</fullName>
    </alternativeName>
</protein>
<sequence>MQNQKTVKIGNIDVANDKPFTLFAGMNVLESRDLAMQICEKYVEVTDRLGIPYVFKASFDKANRSSVHSYRGPGMEEGLKIFQELKDTFGVKIITDIHTEAQAQPVADVVDVIQLPAFLARQTDLVEAMAKTGAVINVKKPQFMSPDQVGNIIDKFSECGNENIILCERGSCMGYDNLVVDMLGFGVMKKASNGSPIIFDVTHSLQNRDPSGKASGGRRSQTVELAKAGLATGIAGLFIEAHPNPDKALCDGPSALPLDQLEPFLKQMKSLDDLIKGFEHIDIK</sequence>
<reference key="1">
    <citation type="submission" date="2008-08" db="EMBL/GenBank/DDBJ databases">
        <title>Complete sequence of Vibrio fischeri strain MJ11.</title>
        <authorList>
            <person name="Mandel M.J."/>
            <person name="Stabb E.V."/>
            <person name="Ruby E.G."/>
            <person name="Ferriera S."/>
            <person name="Johnson J."/>
            <person name="Kravitz S."/>
            <person name="Beeson K."/>
            <person name="Sutton G."/>
            <person name="Rogers Y.-H."/>
            <person name="Friedman R."/>
            <person name="Frazier M."/>
            <person name="Venter J.C."/>
        </authorList>
    </citation>
    <scope>NUCLEOTIDE SEQUENCE [LARGE SCALE GENOMIC DNA]</scope>
    <source>
        <strain>MJ11</strain>
    </source>
</reference>
<evidence type="ECO:0000255" key="1">
    <source>
        <dbReference type="HAMAP-Rule" id="MF_00056"/>
    </source>
</evidence>
<dbReference type="EC" id="2.5.1.55" evidence="1"/>
<dbReference type="EMBL" id="CP001139">
    <property type="protein sequence ID" value="ACH66383.1"/>
    <property type="molecule type" value="Genomic_DNA"/>
</dbReference>
<dbReference type="RefSeq" id="WP_005418209.1">
    <property type="nucleotide sequence ID" value="NC_011184.1"/>
</dbReference>
<dbReference type="SMR" id="B5FBX4"/>
<dbReference type="GeneID" id="54163439"/>
<dbReference type="KEGG" id="vfm:VFMJ11_0808"/>
<dbReference type="HOGENOM" id="CLU_036666_0_0_6"/>
<dbReference type="UniPathway" id="UPA00030"/>
<dbReference type="UniPathway" id="UPA00357">
    <property type="reaction ID" value="UER00474"/>
</dbReference>
<dbReference type="Proteomes" id="UP000001857">
    <property type="component" value="Chromosome I"/>
</dbReference>
<dbReference type="GO" id="GO:0005737">
    <property type="term" value="C:cytoplasm"/>
    <property type="evidence" value="ECO:0007669"/>
    <property type="project" value="UniProtKB-SubCell"/>
</dbReference>
<dbReference type="GO" id="GO:0008676">
    <property type="term" value="F:3-deoxy-8-phosphooctulonate synthase activity"/>
    <property type="evidence" value="ECO:0007669"/>
    <property type="project" value="UniProtKB-UniRule"/>
</dbReference>
<dbReference type="GO" id="GO:0019294">
    <property type="term" value="P:keto-3-deoxy-D-manno-octulosonic acid biosynthetic process"/>
    <property type="evidence" value="ECO:0007669"/>
    <property type="project" value="UniProtKB-UniRule"/>
</dbReference>
<dbReference type="FunFam" id="3.20.20.70:FF:000058">
    <property type="entry name" value="2-dehydro-3-deoxyphosphooctonate aldolase"/>
    <property type="match status" value="1"/>
</dbReference>
<dbReference type="Gene3D" id="3.20.20.70">
    <property type="entry name" value="Aldolase class I"/>
    <property type="match status" value="1"/>
</dbReference>
<dbReference type="HAMAP" id="MF_00056">
    <property type="entry name" value="KDO8P_synth"/>
    <property type="match status" value="1"/>
</dbReference>
<dbReference type="InterPro" id="IPR013785">
    <property type="entry name" value="Aldolase_TIM"/>
</dbReference>
<dbReference type="InterPro" id="IPR006218">
    <property type="entry name" value="DAHP1/KDSA"/>
</dbReference>
<dbReference type="InterPro" id="IPR006269">
    <property type="entry name" value="KDO8P_synthase"/>
</dbReference>
<dbReference type="NCBIfam" id="TIGR01362">
    <property type="entry name" value="KDO8P_synth"/>
    <property type="match status" value="1"/>
</dbReference>
<dbReference type="NCBIfam" id="NF003543">
    <property type="entry name" value="PRK05198.1"/>
    <property type="match status" value="1"/>
</dbReference>
<dbReference type="NCBIfam" id="NF009109">
    <property type="entry name" value="PRK12457.1"/>
    <property type="match status" value="1"/>
</dbReference>
<dbReference type="PANTHER" id="PTHR21057">
    <property type="entry name" value="PHOSPHO-2-DEHYDRO-3-DEOXYHEPTONATE ALDOLASE"/>
    <property type="match status" value="1"/>
</dbReference>
<dbReference type="Pfam" id="PF00793">
    <property type="entry name" value="DAHP_synth_1"/>
    <property type="match status" value="1"/>
</dbReference>
<dbReference type="SUPFAM" id="SSF51569">
    <property type="entry name" value="Aldolase"/>
    <property type="match status" value="1"/>
</dbReference>
<accession>B5FBX4</accession>
<name>KDSA_ALIFM</name>
<proteinExistence type="inferred from homology"/>
<feature type="chain" id="PRO_1000091841" description="2-dehydro-3-deoxyphosphooctonate aldolase">
    <location>
        <begin position="1"/>
        <end position="284"/>
    </location>
</feature>
<gene>
    <name evidence="1" type="primary">kdsA</name>
    <name type="ordered locus">VFMJ11_0808</name>
</gene>
<organism>
    <name type="scientific">Aliivibrio fischeri (strain MJ11)</name>
    <name type="common">Vibrio fischeri</name>
    <dbReference type="NCBI Taxonomy" id="388396"/>
    <lineage>
        <taxon>Bacteria</taxon>
        <taxon>Pseudomonadati</taxon>
        <taxon>Pseudomonadota</taxon>
        <taxon>Gammaproteobacteria</taxon>
        <taxon>Vibrionales</taxon>
        <taxon>Vibrionaceae</taxon>
        <taxon>Aliivibrio</taxon>
    </lineage>
</organism>
<comment type="catalytic activity">
    <reaction evidence="1">
        <text>D-arabinose 5-phosphate + phosphoenolpyruvate + H2O = 3-deoxy-alpha-D-manno-2-octulosonate-8-phosphate + phosphate</text>
        <dbReference type="Rhea" id="RHEA:14053"/>
        <dbReference type="ChEBI" id="CHEBI:15377"/>
        <dbReference type="ChEBI" id="CHEBI:43474"/>
        <dbReference type="ChEBI" id="CHEBI:57693"/>
        <dbReference type="ChEBI" id="CHEBI:58702"/>
        <dbReference type="ChEBI" id="CHEBI:85985"/>
        <dbReference type="EC" id="2.5.1.55"/>
    </reaction>
</comment>
<comment type="pathway">
    <text evidence="1">Carbohydrate biosynthesis; 3-deoxy-D-manno-octulosonate biosynthesis; 3-deoxy-D-manno-octulosonate from D-ribulose 5-phosphate: step 2/3.</text>
</comment>
<comment type="pathway">
    <text evidence="1">Bacterial outer membrane biogenesis; lipopolysaccharide biosynthesis.</text>
</comment>
<comment type="subcellular location">
    <subcellularLocation>
        <location evidence="1">Cytoplasm</location>
    </subcellularLocation>
</comment>
<comment type="similarity">
    <text evidence="1">Belongs to the KdsA family.</text>
</comment>
<keyword id="KW-0963">Cytoplasm</keyword>
<keyword id="KW-0448">Lipopolysaccharide biosynthesis</keyword>
<keyword id="KW-0808">Transferase</keyword>